<reference key="1">
    <citation type="journal article" date="1998" name="Science">
        <title>Genome sequence of the nematode C. elegans: a platform for investigating biology.</title>
        <authorList>
            <consortium name="The C. elegans sequencing consortium"/>
        </authorList>
    </citation>
    <scope>NUCLEOTIDE SEQUENCE [LARGE SCALE GENOMIC DNA]</scope>
    <source>
        <strain>Bristol N2</strain>
    </source>
</reference>
<reference key="2">
    <citation type="journal article" date="2004" name="Curr. Biol.">
        <title>BRCA1/BARD1 orthologs required for DNA repair in Caenorhabditis elegans.</title>
        <authorList>
            <person name="Boulton S.J."/>
            <person name="Martin J.S."/>
            <person name="Polanowska J."/>
            <person name="Hill D.E."/>
            <person name="Gartner A."/>
            <person name="Vidal M."/>
        </authorList>
    </citation>
    <scope>FUNCTION</scope>
    <scope>INTERACTION WITH BRC-1; SMT-3; TAC-1 AND UBC-9</scope>
    <scope>DISRUPTION PHENOTYPE</scope>
</reference>
<reference key="3">
    <citation type="journal article" date="2006" name="Cell Cycle">
        <title>BRCA1-mediated ubiquitylation.</title>
        <authorList>
            <person name="Boulton S.J."/>
        </authorList>
    </citation>
    <scope>DISRUPTION PHENOTYPE</scope>
</reference>
<reference key="4">
    <citation type="journal article" date="2006" name="EMBO J.">
        <title>A conserved pathway to activate BRCA1-dependent ubiquitylation at DNA damage sites.</title>
        <authorList>
            <person name="Polanowska J."/>
            <person name="Martin J.S."/>
            <person name="Garcia-Muse T."/>
            <person name="Petalcorin M.I.R."/>
            <person name="Boulton S.J."/>
        </authorList>
    </citation>
    <scope>FUNCTION</scope>
    <scope>CATALYTIC ACTIVITY</scope>
    <scope>ACTIVITY REGULATION</scope>
    <scope>IDENTIFICATION IN CEBCD COMPLEX WITH BRC-1; RAD-51 AND LET-70</scope>
    <scope>SUBUNIT</scope>
    <scope>SUBCELLULAR LOCATION</scope>
    <scope>AUTOUBIQUITINATION</scope>
    <scope>PHOSPHORYLATION</scope>
    <scope>DISRUPTION PHENOTYPE</scope>
</reference>
<reference key="5">
    <citation type="journal article" date="2018" name="PLoS Genet.">
        <title>BRCA1-BARD1 associate with the synaptonemal complex and pro-crossover factors and influence RAD-51 dynamics during Caenorhabditis elegans meiosis.</title>
        <authorList>
            <person name="Janisiw E."/>
            <person name="Dello Stritto M.R."/>
            <person name="Jantsch V."/>
            <person name="Silva N."/>
        </authorList>
    </citation>
    <scope>FUNCTION</scope>
    <scope>INTERACTION WITH MSH-5 AND SYP-3</scope>
    <scope>SUBCELLULAR LOCATION</scope>
</reference>
<protein>
    <recommendedName>
        <fullName evidence="10">BRCA1-associated RING domain protein 1</fullName>
        <shortName evidence="10">BARD1</shortName>
        <shortName evidence="9">Ce-BRD-1</shortName>
        <shortName evidence="10">Cebrd-1</shortName>
        <ecNumber evidence="6">2.3.2.27</ecNumber>
    </recommendedName>
    <alternativeName>
        <fullName evidence="11">RING-type E3 ubiquitin transferase BARD1</fullName>
    </alternativeName>
</protein>
<sequence>MFENTKKALETFRTAIECVKCKKPRGDLQYLGSSCKHAYCWECIATFQQKPSGKRSSVARHMCPSCAFPLDTSKITEAHMLKTCFDTLSELNDLLQKVGTTSLTQAEFACTQNIFNKEKTPADAVEKFLETQAHMPDEMGQLGEEDDDLMCKDENRENSNSPELDIFHDYSKEASPTRNSTKRPSTVSVHERKPKRSSILKTSVKNEPAAPVVDLFASQVPQRTHQNDLLTPFIERRSTAPAATGVATYAQAFGSSSNPVKAEIIEEDIFSKAIPLTKRQASMSASAKKQPKLEPEEPEEVPSTSRSRKNSIKSDKIERRSQSPMSFGEKSMSVKSEQRRSSYGTRRGEAVLVNSIRNNRIPQLRSAVEAGTCVNEKEDGKTPLYVAVENSSLEAVKILVEAGAVINASCGSTLETTLHEAVRRQNTQIVEYLLSKGASIKIRNIAGKTVEEMAKSDPKIRKIIEKFKTEQRVLQPVVAPPKSRLHFVQLIDEKMLTESEKRKLPGKINIVPADMDSPTHVVVTVDLKTRVLNINKEHIGEILKAIIKSGMIVSRDWLRACIIDPSKVDDDRSYMVQKVRWMEGEVFENTIEQWKKTITKMQPKLFAGCKFFIPKPKYNFLDRPALFEIIRSAGGQAAAREPIIDEKDPPPYHNANLKPNFVLYSLTHDIGDKFRDCTKYNLVSEQWLIEAILGCSITTPPH</sequence>
<keyword id="KW-0040">ANK repeat</keyword>
<keyword id="KW-0158">Chromosome</keyword>
<keyword id="KW-0963">Cytoplasm</keyword>
<keyword id="KW-0227">DNA damage</keyword>
<keyword id="KW-0234">DNA repair</keyword>
<keyword id="KW-0479">Metal-binding</keyword>
<keyword id="KW-0539">Nucleus</keyword>
<keyword id="KW-0597">Phosphoprotein</keyword>
<keyword id="KW-1185">Reference proteome</keyword>
<keyword id="KW-0677">Repeat</keyword>
<keyword id="KW-0808">Transferase</keyword>
<keyword id="KW-0832">Ubl conjugation</keyword>
<keyword id="KW-0833">Ubl conjugation pathway</keyword>
<keyword id="KW-0862">Zinc</keyword>
<keyword id="KW-0863">Zinc-finger</keyword>
<name>BARD1_CAEEL</name>
<comment type="function">
    <text evidence="5 6 8">Constituent of the CeBCD complex that possesses E3 ubiquitin-protein ligase activity (PubMed:16628214). When bound to chromatin, the brc-1-brd-1 heterodimer within the CeBCD complex is inactive during normal conditions, but in response to DNA damage, the brc-1-brd-1 heterodimer associates with other proteins such as the recombinase rad-51 or the E2-ubiquitin-conjugating enzyme let-70, which activate the CeBCD complex as an E3-ubiquitin ligase (PubMed:16628214). Moreover, association between the brc-1-brd-1 heterodimer and rad-51 and let-70, probably requires DNA checkpoint proteins such as atl-1 and mre-11 in order to induce ubiquitination at DNA damage sites (PubMed:16628214). To this end, the brc-1-brd-1 heterodimer coordinates a diverse range of cellular pathways such as DNA damage repair, ubiquitination and transcriptional regulation to maintain genomic stability (PubMed:14711411, PubMed:30383754). Plays a role in triggering cellular responses at damage sites in response to DNA damage that may be induced by ionizing radiation for example (PubMed:14711411, PubMed:30383754). In particular, protects against chromosome non-disjunction and nuclear fragmentation during meiotic double-strand break repair to ensure sister chromatid recombination and aid chromosome stability (PubMed:14711411).</text>
</comment>
<comment type="catalytic activity">
    <reaction evidence="6">
        <text>S-ubiquitinyl-[E2 ubiquitin-conjugating enzyme]-L-cysteine + [acceptor protein]-L-lysine = [E2 ubiquitin-conjugating enzyme]-L-cysteine + N(6)-ubiquitinyl-[acceptor protein]-L-lysine.</text>
        <dbReference type="EC" id="2.3.2.27"/>
    </reaction>
</comment>
<comment type="activity regulation">
    <text evidence="6">E3 ubiquitin-protein ligase activity of CeBCD complexes occurs at DNA damage sites. Following DNA damage, E3 ubiquitin-protein ligase activity is reduced by caffeine treatment (inhibitor of ATM and ATK kinase activity).</text>
</comment>
<comment type="pathway">
    <text evidence="5">Protein modification; protein ubiquitination.</text>
</comment>
<comment type="subunit">
    <text evidence="5 6 8">Heterodimer (via RING-type zinc finger) with brc-1 to form the core CeBCD complex (PubMed:16628214). Brc-1-brd-1 heterodimer-containing CeBCD complexes bound to chromatin are activated as an E3-ubiquitin ligase in response to DNA damage (PubMed:16628214). The heterodimer interacts with the recombinase rad-51 following ionizing irradiation; the interaction is direct (PubMed:16628214). The heterodimer interacts the E2-ubiquitin-conjugating enzyme let-70 following ionizing irradiation (PubMed:16628214). The heterodimer interacts with the pro-crossover proteins msh-5 and syp-3 (PubMed:30383754). Interacts with smt-3, tac-1 and ubc-9 (PubMed:14711411).</text>
</comment>
<comment type="interaction">
    <interactant intactId="EBI-3895480">
        <id>Q21209</id>
    </interactant>
    <interactant intactId="EBI-3895496">
        <id>B6VQ60</id>
        <label>brc-1</label>
    </interactant>
    <organismsDiffer>false</organismsDiffer>
    <experiments>4</experiments>
</comment>
<comment type="interaction">
    <interactant intactId="EBI-3895480">
        <id>Q21209</id>
    </interactant>
    <interactant intactId="EBI-313647">
        <id>P55853</id>
        <label>smo-1</label>
    </interactant>
    <organismsDiffer>false</organismsDiffer>
    <experiments>3</experiments>
</comment>
<comment type="interaction">
    <interactant intactId="EBI-3895480">
        <id>Q21209</id>
    </interactant>
    <interactant intactId="EBI-328938">
        <id>Q95017</id>
        <label>ubc-9</label>
    </interactant>
    <organismsDiffer>false</organismsDiffer>
    <experiments>4</experiments>
</comment>
<comment type="subcellular location">
    <subcellularLocation>
        <location evidence="6">Cytoplasm</location>
    </subcellularLocation>
    <subcellularLocation>
        <location evidence="6 8">Nucleus</location>
    </subcellularLocation>
    <subcellularLocation>
        <location evidence="6 8">Chromosome</location>
    </subcellularLocation>
    <text evidence="8">Co-localizes with brc-1 in germline nuclei at meiotic prophase I (PubMed:30383754). At the transition between mid- and late- pachytene, localization together with brc-1 is less diffuse and becomes a linear pattern along the chromosomes (PubMed:30383754). In late pachytene nuclei, co-localizes with brc-1 at crossover sites and the short arm of homologous chromosomes (PubMed:30383754).</text>
</comment>
<comment type="PTM">
    <text evidence="6">Autoubiquitinated.</text>
</comment>
<comment type="PTM">
    <text evidence="6">Phosphorylation of CeBCD complexes is required for E3 ubiquitin-protein ligase activity.</text>
</comment>
<comment type="disruption phenotype">
    <text evidence="5 6 7">DNA damage repair defects following ionizing radiation with reduced ubiquitination at DNA damage sites (PubMed:16628214). RNAi-mediated knockdown results in elevated levels of chromosome non-disjunction that manifest as a high incidence of males, impaired progeny survival and chromosome fragmentation after irradiation and elevated levels of p53-dependent germ cell death before and after irradiation (PubMed:14711411). Absence of S-phase checkpoint function.</text>
</comment>
<accession>Q21209</accession>
<organism>
    <name type="scientific">Caenorhabditis elegans</name>
    <dbReference type="NCBI Taxonomy" id="6239"/>
    <lineage>
        <taxon>Eukaryota</taxon>
        <taxon>Metazoa</taxon>
        <taxon>Ecdysozoa</taxon>
        <taxon>Nematoda</taxon>
        <taxon>Chromadorea</taxon>
        <taxon>Rhabditida</taxon>
        <taxon>Rhabditina</taxon>
        <taxon>Rhabditomorpha</taxon>
        <taxon>Rhabditoidea</taxon>
        <taxon>Rhabditidae</taxon>
        <taxon>Peloderinae</taxon>
        <taxon>Caenorhabditis</taxon>
    </lineage>
</organism>
<evidence type="ECO:0000255" key="1"/>
<evidence type="ECO:0000255" key="2">
    <source>
        <dbReference type="PROSITE-ProRule" id="PRU00033"/>
    </source>
</evidence>
<evidence type="ECO:0000255" key="3">
    <source>
        <dbReference type="PROSITE-ProRule" id="PRU00175"/>
    </source>
</evidence>
<evidence type="ECO:0000256" key="4">
    <source>
        <dbReference type="SAM" id="MobiDB-lite"/>
    </source>
</evidence>
<evidence type="ECO:0000269" key="5">
    <source>
    </source>
</evidence>
<evidence type="ECO:0000269" key="6">
    <source>
    </source>
</evidence>
<evidence type="ECO:0000269" key="7">
    <source>
    </source>
</evidence>
<evidence type="ECO:0000269" key="8">
    <source>
    </source>
</evidence>
<evidence type="ECO:0000303" key="9">
    <source>
    </source>
</evidence>
<evidence type="ECO:0000303" key="10">
    <source>
    </source>
</evidence>
<evidence type="ECO:0000305" key="11"/>
<evidence type="ECO:0000312" key="12">
    <source>
        <dbReference type="WormBase" id="K04C2.4"/>
    </source>
</evidence>
<gene>
    <name evidence="9 12" type="primary">brd-1</name>
    <name evidence="12" type="ORF">K04C2.4</name>
</gene>
<dbReference type="EC" id="2.3.2.27" evidence="6"/>
<dbReference type="EMBL" id="FO081584">
    <property type="protein sequence ID" value="CCD72622.1"/>
    <property type="molecule type" value="Genomic_DNA"/>
</dbReference>
<dbReference type="RefSeq" id="NP_498498.3">
    <property type="nucleotide sequence ID" value="NM_066097.6"/>
</dbReference>
<dbReference type="SMR" id="Q21209"/>
<dbReference type="BioGRID" id="41174">
    <property type="interactions" value="9"/>
</dbReference>
<dbReference type="ComplexPortal" id="CPX-375">
    <property type="entry name" value="brc-1/brd-1 E3 ubiquitin ligase complex"/>
</dbReference>
<dbReference type="FunCoup" id="Q21209">
    <property type="interactions" value="144"/>
</dbReference>
<dbReference type="IntAct" id="Q21209">
    <property type="interactions" value="5"/>
</dbReference>
<dbReference type="MINT" id="Q21209"/>
<dbReference type="STRING" id="6239.K04C2.4.2"/>
<dbReference type="PaxDb" id="6239-K04C2.4.1"/>
<dbReference type="PeptideAtlas" id="Q21209"/>
<dbReference type="EnsemblMetazoa" id="K04C2.4.1">
    <property type="protein sequence ID" value="K04C2.4.1"/>
    <property type="gene ID" value="WBGene00000265"/>
</dbReference>
<dbReference type="GeneID" id="175959"/>
<dbReference type="KEGG" id="cel:CELE_K04C2.4"/>
<dbReference type="UCSC" id="K04C2.4.1">
    <property type="organism name" value="c. elegans"/>
</dbReference>
<dbReference type="AGR" id="WB:WBGene00000265"/>
<dbReference type="CTD" id="175959"/>
<dbReference type="WormBase" id="K04C2.4">
    <property type="protein sequence ID" value="CE44987"/>
    <property type="gene ID" value="WBGene00000265"/>
    <property type="gene designation" value="brd-1"/>
</dbReference>
<dbReference type="eggNOG" id="KOG4362">
    <property type="taxonomic scope" value="Eukaryota"/>
</dbReference>
<dbReference type="HOGENOM" id="CLU_401278_0_0_1"/>
<dbReference type="InParanoid" id="Q21209"/>
<dbReference type="OMA" id="WLIEAIL"/>
<dbReference type="OrthoDB" id="194358at2759"/>
<dbReference type="PhylomeDB" id="Q21209"/>
<dbReference type="SignaLink" id="Q21209"/>
<dbReference type="UniPathway" id="UPA00143"/>
<dbReference type="PRO" id="PR:Q21209"/>
<dbReference type="Proteomes" id="UP000001940">
    <property type="component" value="Chromosome III"/>
</dbReference>
<dbReference type="Bgee" id="WBGene00000265">
    <property type="expression patterns" value="Expressed in germ line (C elegans) and 4 other cell types or tissues"/>
</dbReference>
<dbReference type="GO" id="GO:0070531">
    <property type="term" value="C:BRCA1-A complex"/>
    <property type="evidence" value="ECO:0000318"/>
    <property type="project" value="GO_Central"/>
</dbReference>
<dbReference type="GO" id="GO:0031436">
    <property type="term" value="C:BRCA1-BARD1 complex"/>
    <property type="evidence" value="ECO:0000353"/>
    <property type="project" value="WormBase"/>
</dbReference>
<dbReference type="GO" id="GO:0005694">
    <property type="term" value="C:chromosome"/>
    <property type="evidence" value="ECO:0007669"/>
    <property type="project" value="UniProtKB-SubCell"/>
</dbReference>
<dbReference type="GO" id="GO:0005737">
    <property type="term" value="C:cytoplasm"/>
    <property type="evidence" value="ECO:0007669"/>
    <property type="project" value="UniProtKB-SubCell"/>
</dbReference>
<dbReference type="GO" id="GO:0061630">
    <property type="term" value="F:ubiquitin protein ligase activity"/>
    <property type="evidence" value="ECO:0000314"/>
    <property type="project" value="WormBase"/>
</dbReference>
<dbReference type="GO" id="GO:0008270">
    <property type="term" value="F:zinc ion binding"/>
    <property type="evidence" value="ECO:0007669"/>
    <property type="project" value="UniProtKB-KW"/>
</dbReference>
<dbReference type="GO" id="GO:0006974">
    <property type="term" value="P:DNA damage response"/>
    <property type="evidence" value="ECO:0000315"/>
    <property type="project" value="WormBase"/>
</dbReference>
<dbReference type="GO" id="GO:0006281">
    <property type="term" value="P:DNA repair"/>
    <property type="evidence" value="ECO:0000315"/>
    <property type="project" value="WormBase"/>
</dbReference>
<dbReference type="GO" id="GO:1905168">
    <property type="term" value="P:positive regulation of double-strand break repair via homologous recombination"/>
    <property type="evidence" value="ECO:0000269"/>
    <property type="project" value="ComplexPortal"/>
</dbReference>
<dbReference type="GO" id="GO:0085020">
    <property type="term" value="P:protein K6-linked ubiquitination"/>
    <property type="evidence" value="ECO:0000318"/>
    <property type="project" value="GO_Central"/>
</dbReference>
<dbReference type="GO" id="GO:0016567">
    <property type="term" value="P:protein ubiquitination"/>
    <property type="evidence" value="ECO:0000314"/>
    <property type="project" value="WormBase"/>
</dbReference>
<dbReference type="CDD" id="cd23143">
    <property type="entry name" value="RING-HC_CeBARD1-like"/>
    <property type="match status" value="1"/>
</dbReference>
<dbReference type="Gene3D" id="1.25.40.20">
    <property type="entry name" value="Ankyrin repeat-containing domain"/>
    <property type="match status" value="1"/>
</dbReference>
<dbReference type="Gene3D" id="3.40.50.10190">
    <property type="entry name" value="BRCT domain"/>
    <property type="match status" value="1"/>
</dbReference>
<dbReference type="Gene3D" id="3.30.40.10">
    <property type="entry name" value="Zinc/RING finger domain, C3HC4 (zinc finger)"/>
    <property type="match status" value="1"/>
</dbReference>
<dbReference type="InterPro" id="IPR053345">
    <property type="entry name" value="Ankyrin_repeat-containing"/>
</dbReference>
<dbReference type="InterPro" id="IPR002110">
    <property type="entry name" value="Ankyrin_rpt"/>
</dbReference>
<dbReference type="InterPro" id="IPR036770">
    <property type="entry name" value="Ankyrin_rpt-contain_sf"/>
</dbReference>
<dbReference type="InterPro" id="IPR001357">
    <property type="entry name" value="BRCT_dom"/>
</dbReference>
<dbReference type="InterPro" id="IPR036420">
    <property type="entry name" value="BRCT_dom_sf"/>
</dbReference>
<dbReference type="InterPro" id="IPR001841">
    <property type="entry name" value="Znf_RING"/>
</dbReference>
<dbReference type="InterPro" id="IPR013083">
    <property type="entry name" value="Znf_RING/FYVE/PHD"/>
</dbReference>
<dbReference type="InterPro" id="IPR017907">
    <property type="entry name" value="Znf_RING_CS"/>
</dbReference>
<dbReference type="PANTHER" id="PTHR22956">
    <property type="entry name" value="ANKYRIN REPEAT-CONTAINING PROTEIN F37A4.4-RELATED-RELATED"/>
    <property type="match status" value="1"/>
</dbReference>
<dbReference type="PANTHER" id="PTHR22956:SF15">
    <property type="entry name" value="DOMAIN OF UNKNOWN FUNCTION WSN DOMAIN-CONTAINING PROTEIN"/>
    <property type="match status" value="1"/>
</dbReference>
<dbReference type="Pfam" id="PF12796">
    <property type="entry name" value="Ank_2"/>
    <property type="match status" value="1"/>
</dbReference>
<dbReference type="PRINTS" id="PR01415">
    <property type="entry name" value="ANKYRIN"/>
</dbReference>
<dbReference type="SMART" id="SM00248">
    <property type="entry name" value="ANK"/>
    <property type="match status" value="2"/>
</dbReference>
<dbReference type="SUPFAM" id="SSF48403">
    <property type="entry name" value="Ankyrin repeat"/>
    <property type="match status" value="1"/>
</dbReference>
<dbReference type="SUPFAM" id="SSF52113">
    <property type="entry name" value="BRCT domain"/>
    <property type="match status" value="1"/>
</dbReference>
<dbReference type="SUPFAM" id="SSF57850">
    <property type="entry name" value="RING/U-box"/>
    <property type="match status" value="1"/>
</dbReference>
<dbReference type="PROSITE" id="PS50297">
    <property type="entry name" value="ANK_REP_REGION"/>
    <property type="match status" value="1"/>
</dbReference>
<dbReference type="PROSITE" id="PS50088">
    <property type="entry name" value="ANK_REPEAT"/>
    <property type="match status" value="2"/>
</dbReference>
<dbReference type="PROSITE" id="PS50172">
    <property type="entry name" value="BRCT"/>
    <property type="match status" value="1"/>
</dbReference>
<dbReference type="PROSITE" id="PS00518">
    <property type="entry name" value="ZF_RING_1"/>
    <property type="match status" value="1"/>
</dbReference>
<dbReference type="PROSITE" id="PS50089">
    <property type="entry name" value="ZF_RING_2"/>
    <property type="match status" value="1"/>
</dbReference>
<feature type="chain" id="PRO_0000403993" description="BRCA1-associated RING domain protein 1">
    <location>
        <begin position="1"/>
        <end position="702"/>
    </location>
</feature>
<feature type="repeat" description="ANK 1" evidence="1">
    <location>
        <begin position="347"/>
        <end position="376"/>
    </location>
</feature>
<feature type="repeat" description="ANK 2" evidence="1">
    <location>
        <begin position="379"/>
        <end position="408"/>
    </location>
</feature>
<feature type="repeat" description="ANK 3" evidence="1">
    <location>
        <begin position="413"/>
        <end position="442"/>
    </location>
</feature>
<feature type="domain" description="BRCT" evidence="2">
    <location>
        <begin position="601"/>
        <end position="702"/>
    </location>
</feature>
<feature type="zinc finger region" description="RING-type" evidence="3">
    <location>
        <begin position="18"/>
        <end position="67"/>
    </location>
</feature>
<feature type="region of interest" description="Disordered" evidence="4">
    <location>
        <begin position="153"/>
        <end position="205"/>
    </location>
</feature>
<feature type="region of interest" description="Disordered" evidence="4">
    <location>
        <begin position="281"/>
        <end position="346"/>
    </location>
</feature>
<feature type="compositionally biased region" description="Polar residues" evidence="4">
    <location>
        <begin position="174"/>
        <end position="188"/>
    </location>
</feature>
<feature type="compositionally biased region" description="Basic and acidic residues" evidence="4">
    <location>
        <begin position="312"/>
        <end position="321"/>
    </location>
</feature>
<proteinExistence type="evidence at protein level"/>